<feature type="chain" id="PRO_0000100010" description="Ribosomal large subunit pseudouridine synthase E">
    <location>
        <begin position="1"/>
        <end position="241"/>
    </location>
</feature>
<feature type="region of interest" description="Disordered" evidence="2">
    <location>
        <begin position="1"/>
        <end position="65"/>
    </location>
</feature>
<feature type="compositionally biased region" description="Low complexity" evidence="2">
    <location>
        <begin position="1"/>
        <end position="14"/>
    </location>
</feature>
<feature type="compositionally biased region" description="Basic residues" evidence="2">
    <location>
        <begin position="36"/>
        <end position="47"/>
    </location>
</feature>
<feature type="active site" description="Nucleophile" evidence="1">
    <location>
        <position position="104"/>
    </location>
</feature>
<feature type="sequence conflict" description="In Ref. 1; AAG16128." evidence="3" ref="1">
    <original>V</original>
    <variation>G</variation>
    <location>
        <position position="97"/>
    </location>
</feature>
<gene>
    <name type="primary">rluE</name>
    <name type="ordered locus">VC_1140</name>
</gene>
<name>RLUE_VIBCH</name>
<evidence type="ECO:0000250" key="1"/>
<evidence type="ECO:0000256" key="2">
    <source>
        <dbReference type="SAM" id="MobiDB-lite"/>
    </source>
</evidence>
<evidence type="ECO:0000305" key="3"/>
<keyword id="KW-0413">Isomerase</keyword>
<keyword id="KW-1185">Reference proteome</keyword>
<keyword id="KW-0698">rRNA processing</keyword>
<proteinExistence type="inferred from homology"/>
<accession>Q9F855</accession>
<accession>Q9KSW6</accession>
<protein>
    <recommendedName>
        <fullName>Ribosomal large subunit pseudouridine synthase E</fullName>
        <ecNumber>5.4.99.20</ecNumber>
    </recommendedName>
    <alternativeName>
        <fullName>rRNA pseudouridylate synthase E</fullName>
    </alternativeName>
    <alternativeName>
        <fullName>rRNA-uridine isomerase E</fullName>
    </alternativeName>
</protein>
<sequence>MSSRLSSDATSSSSDQRKSHFKQRAAKNAGHPPTRANRKSVANKKKNATQTALSPKRPLSPAERKVILFNKPYDTLSQFTDGDGRKTLADYIPIKDVYAAGRLDRDSEGLLILTNDGILQARLTQPQSKAPKTYWVQVEGSPQESDLEALRHGVTLKDGPTLPAKVDIMPEPTLWPRNPPVRFRAAIPTTWLAITLMEGRNRQVRRMTAHIGFPTLRLIRYSMGDWNLGDLQPGEWREVTL</sequence>
<organism>
    <name type="scientific">Vibrio cholerae serotype O1 (strain ATCC 39315 / El Tor Inaba N16961)</name>
    <dbReference type="NCBI Taxonomy" id="243277"/>
    <lineage>
        <taxon>Bacteria</taxon>
        <taxon>Pseudomonadati</taxon>
        <taxon>Pseudomonadota</taxon>
        <taxon>Gammaproteobacteria</taxon>
        <taxon>Vibrionales</taxon>
        <taxon>Vibrionaceae</taxon>
        <taxon>Vibrio</taxon>
    </lineage>
</organism>
<comment type="function">
    <text evidence="1">Responsible for synthesis of pseudouridine from uracil-2457 in 23S ribosomal RNA.</text>
</comment>
<comment type="catalytic activity">
    <reaction>
        <text>uridine(2457) in 23S rRNA = pseudouridine(2457) in 23S rRNA</text>
        <dbReference type="Rhea" id="RHEA:38871"/>
        <dbReference type="Rhea" id="RHEA-COMP:10091"/>
        <dbReference type="Rhea" id="RHEA-COMP:10092"/>
        <dbReference type="ChEBI" id="CHEBI:65314"/>
        <dbReference type="ChEBI" id="CHEBI:65315"/>
        <dbReference type="EC" id="5.4.99.20"/>
    </reaction>
</comment>
<comment type="similarity">
    <text evidence="3">Belongs to the pseudouridine synthase RsuA family.</text>
</comment>
<comment type="sequence caution" evidence="3">
    <conflict type="erroneous initiation">
        <sequence resource="EMBL-CDS" id="AAF94299"/>
    </conflict>
</comment>
<reference key="1">
    <citation type="submission" date="2000-04" db="EMBL/GenBank/DDBJ databases">
        <authorList>
            <person name="Haralalka S."/>
            <person name="Roychoudhury S."/>
            <person name="Chaudhuri K."/>
        </authorList>
    </citation>
    <scope>NUCLEOTIDE SEQUENCE [GENOMIC DNA]</scope>
    <source>
        <strain>ATCC 25870 / Classical Inaba 569B / Serotype O1</strain>
    </source>
</reference>
<reference key="2">
    <citation type="journal article" date="2000" name="Nature">
        <title>DNA sequence of both chromosomes of the cholera pathogen Vibrio cholerae.</title>
        <authorList>
            <person name="Heidelberg J.F."/>
            <person name="Eisen J.A."/>
            <person name="Nelson W.C."/>
            <person name="Clayton R.A."/>
            <person name="Gwinn M.L."/>
            <person name="Dodson R.J."/>
            <person name="Haft D.H."/>
            <person name="Hickey E.K."/>
            <person name="Peterson J.D."/>
            <person name="Umayam L.A."/>
            <person name="Gill S.R."/>
            <person name="Nelson K.E."/>
            <person name="Read T.D."/>
            <person name="Tettelin H."/>
            <person name="Richardson D.L."/>
            <person name="Ermolaeva M.D."/>
            <person name="Vamathevan J.J."/>
            <person name="Bass S."/>
            <person name="Qin H."/>
            <person name="Dragoi I."/>
            <person name="Sellers P."/>
            <person name="McDonald L.A."/>
            <person name="Utterback T.R."/>
            <person name="Fleischmann R.D."/>
            <person name="Nierman W.C."/>
            <person name="White O."/>
            <person name="Salzberg S.L."/>
            <person name="Smith H.O."/>
            <person name="Colwell R.R."/>
            <person name="Mekalanos J.J."/>
            <person name="Venter J.C."/>
            <person name="Fraser C.M."/>
        </authorList>
    </citation>
    <scope>NUCLEOTIDE SEQUENCE [LARGE SCALE GENOMIC DNA]</scope>
    <source>
        <strain>ATCC 39315 / El Tor Inaba N16961</strain>
    </source>
</reference>
<dbReference type="EC" id="5.4.99.20"/>
<dbReference type="EMBL" id="AF261151">
    <property type="protein sequence ID" value="AAG16128.1"/>
    <property type="molecule type" value="Genomic_DNA"/>
</dbReference>
<dbReference type="EMBL" id="AE003852">
    <property type="protein sequence ID" value="AAF94299.1"/>
    <property type="status" value="ALT_INIT"/>
    <property type="molecule type" value="Genomic_DNA"/>
</dbReference>
<dbReference type="PIR" id="A82236">
    <property type="entry name" value="A82236"/>
</dbReference>
<dbReference type="RefSeq" id="NP_230785.2">
    <property type="nucleotide sequence ID" value="NC_002505.1"/>
</dbReference>
<dbReference type="RefSeq" id="WP_000098720.1">
    <property type="nucleotide sequence ID" value="NZ_LT906614.1"/>
</dbReference>
<dbReference type="SMR" id="Q9F855"/>
<dbReference type="STRING" id="243277.VC_1140"/>
<dbReference type="DNASU" id="2614410"/>
<dbReference type="EnsemblBacteria" id="AAF94299">
    <property type="protein sequence ID" value="AAF94299"/>
    <property type="gene ID" value="VC_1140"/>
</dbReference>
<dbReference type="KEGG" id="vch:VC_1140"/>
<dbReference type="PATRIC" id="fig|243277.26.peg.1089"/>
<dbReference type="eggNOG" id="COG1187">
    <property type="taxonomic scope" value="Bacteria"/>
</dbReference>
<dbReference type="HOGENOM" id="CLU_024979_8_0_6"/>
<dbReference type="Proteomes" id="UP000000584">
    <property type="component" value="Chromosome 1"/>
</dbReference>
<dbReference type="GO" id="GO:0160137">
    <property type="term" value="F:23S rRNA pseudouridine(2457) synthase activity"/>
    <property type="evidence" value="ECO:0007669"/>
    <property type="project" value="UniProtKB-EC"/>
</dbReference>
<dbReference type="GO" id="GO:0003723">
    <property type="term" value="F:RNA binding"/>
    <property type="evidence" value="ECO:0007669"/>
    <property type="project" value="InterPro"/>
</dbReference>
<dbReference type="GO" id="GO:0001522">
    <property type="term" value="P:pseudouridine synthesis"/>
    <property type="evidence" value="ECO:0007669"/>
    <property type="project" value="InterPro"/>
</dbReference>
<dbReference type="GO" id="GO:0006364">
    <property type="term" value="P:rRNA processing"/>
    <property type="evidence" value="ECO:0007669"/>
    <property type="project" value="UniProtKB-KW"/>
</dbReference>
<dbReference type="CDD" id="cd02566">
    <property type="entry name" value="PseudoU_synth_RluE"/>
    <property type="match status" value="1"/>
</dbReference>
<dbReference type="Gene3D" id="3.30.70.1560">
    <property type="entry name" value="Alpha-L RNA-binding motif"/>
    <property type="match status" value="1"/>
</dbReference>
<dbReference type="Gene3D" id="3.30.70.580">
    <property type="entry name" value="Pseudouridine synthase I, catalytic domain, N-terminal subdomain"/>
    <property type="match status" value="1"/>
</dbReference>
<dbReference type="InterPro" id="IPR042092">
    <property type="entry name" value="PsdUridine_s_RsuA/RluB/E/F_cat"/>
</dbReference>
<dbReference type="InterPro" id="IPR020103">
    <property type="entry name" value="PsdUridine_synth_cat_dom_sf"/>
</dbReference>
<dbReference type="InterPro" id="IPR006145">
    <property type="entry name" value="PsdUridine_synth_RsuA/RluA"/>
</dbReference>
<dbReference type="InterPro" id="IPR000748">
    <property type="entry name" value="PsdUridine_synth_RsuA/RluB/E/F"/>
</dbReference>
<dbReference type="InterPro" id="IPR018496">
    <property type="entry name" value="PsdUridine_synth_RsuA/RluB_CS"/>
</dbReference>
<dbReference type="InterPro" id="IPR050343">
    <property type="entry name" value="RsuA_PseudoU_synthase"/>
</dbReference>
<dbReference type="InterPro" id="IPR020094">
    <property type="entry name" value="TruA/RsuA/RluB/E/F_N"/>
</dbReference>
<dbReference type="NCBIfam" id="NF008487">
    <property type="entry name" value="PRK11394.1"/>
    <property type="match status" value="1"/>
</dbReference>
<dbReference type="NCBIfam" id="TIGR00093">
    <property type="entry name" value="pseudouridine synthase"/>
    <property type="match status" value="1"/>
</dbReference>
<dbReference type="PANTHER" id="PTHR47683">
    <property type="entry name" value="PSEUDOURIDINE SYNTHASE FAMILY PROTEIN-RELATED"/>
    <property type="match status" value="1"/>
</dbReference>
<dbReference type="PANTHER" id="PTHR47683:SF2">
    <property type="entry name" value="RNA-BINDING S4 DOMAIN-CONTAINING PROTEIN"/>
    <property type="match status" value="1"/>
</dbReference>
<dbReference type="Pfam" id="PF00849">
    <property type="entry name" value="PseudoU_synth_2"/>
    <property type="match status" value="1"/>
</dbReference>
<dbReference type="SUPFAM" id="SSF55120">
    <property type="entry name" value="Pseudouridine synthase"/>
    <property type="match status" value="1"/>
</dbReference>
<dbReference type="PROSITE" id="PS01149">
    <property type="entry name" value="PSI_RSU"/>
    <property type="match status" value="1"/>
</dbReference>